<feature type="chain" id="PRO_0000262324" description="Arginine N-succinyltransferase">
    <location>
        <begin position="1"/>
        <end position="344"/>
    </location>
</feature>
<feature type="active site" description="Proton donor" evidence="1">
    <location>
        <position position="229"/>
    </location>
</feature>
<feature type="binding site" evidence="1">
    <location>
        <position position="125"/>
    </location>
    <ligand>
        <name>succinyl-CoA</name>
        <dbReference type="ChEBI" id="CHEBI:57292"/>
    </ligand>
</feature>
<keyword id="KW-0012">Acyltransferase</keyword>
<keyword id="KW-0056">Arginine metabolism</keyword>
<keyword id="KW-1185">Reference proteome</keyword>
<keyword id="KW-0808">Transferase</keyword>
<organism>
    <name type="scientific">Escherichia coli O6:H1 (strain CFT073 / ATCC 700928 / UPEC)</name>
    <dbReference type="NCBI Taxonomy" id="199310"/>
    <lineage>
        <taxon>Bacteria</taxon>
        <taxon>Pseudomonadati</taxon>
        <taxon>Pseudomonadota</taxon>
        <taxon>Gammaproteobacteria</taxon>
        <taxon>Enterobacterales</taxon>
        <taxon>Enterobacteriaceae</taxon>
        <taxon>Escherichia</taxon>
    </lineage>
</organism>
<name>ASTA_ECOL6</name>
<sequence>MMVIRPVERSDVSALMQLASKTGGGLTSLPANEATLSVRIERAIKTWQGELPKSEQGYVFVLEDSETGTVAGICAIEVAVGLNDPWYNYRVGTLVHASKELNVYNALPTLFLSNDHTGSSELCTLFLDPKWRKEGNGYLLSKSRFMFMAAFRDKFNDKVVAEMRGVIDEHGYSPFWQSLGKRFFSMDFSRADFLCGTGQKAFIAELMPKHPIYTHFLSQEAQDVIGQVHPQTAPARAVLEKEGFRYRNYIDIFDGGPTLECDIDRVRAIRKSRLVEVAEGQPAQGDFPACLVANENYHHFRVVLVRTDPATERLILTAAQLDALKCHAGDRVRLVRLCAEEKTA</sequence>
<reference key="1">
    <citation type="journal article" date="2002" name="Proc. Natl. Acad. Sci. U.S.A.">
        <title>Extensive mosaic structure revealed by the complete genome sequence of uropathogenic Escherichia coli.</title>
        <authorList>
            <person name="Welch R.A."/>
            <person name="Burland V."/>
            <person name="Plunkett G. III"/>
            <person name="Redford P."/>
            <person name="Roesch P."/>
            <person name="Rasko D."/>
            <person name="Buckles E.L."/>
            <person name="Liou S.-R."/>
            <person name="Boutin A."/>
            <person name="Hackett J."/>
            <person name="Stroud D."/>
            <person name="Mayhew G.F."/>
            <person name="Rose D.J."/>
            <person name="Zhou S."/>
            <person name="Schwartz D.C."/>
            <person name="Perna N.T."/>
            <person name="Mobley H.L.T."/>
            <person name="Donnenberg M.S."/>
            <person name="Blattner F.R."/>
        </authorList>
    </citation>
    <scope>NUCLEOTIDE SEQUENCE [LARGE SCALE GENOMIC DNA]</scope>
    <source>
        <strain>CFT073 / ATCC 700928 / UPEC</strain>
    </source>
</reference>
<comment type="function">
    <text evidence="1">Catalyzes the transfer of succinyl-CoA to arginine to produce N(2)-succinylarginine.</text>
</comment>
<comment type="catalytic activity">
    <reaction evidence="1">
        <text>succinyl-CoA + L-arginine = N(2)-succinyl-L-arginine + CoA + H(+)</text>
        <dbReference type="Rhea" id="RHEA:15185"/>
        <dbReference type="ChEBI" id="CHEBI:15378"/>
        <dbReference type="ChEBI" id="CHEBI:32682"/>
        <dbReference type="ChEBI" id="CHEBI:57287"/>
        <dbReference type="ChEBI" id="CHEBI:57292"/>
        <dbReference type="ChEBI" id="CHEBI:58241"/>
        <dbReference type="EC" id="2.3.1.109"/>
    </reaction>
</comment>
<comment type="pathway">
    <text evidence="1">Amino-acid degradation; L-arginine degradation via AST pathway; L-glutamate and succinate from L-arginine: step 1/5.</text>
</comment>
<comment type="similarity">
    <text evidence="1">Belongs to the arginine N-succinyltransferase family.</text>
</comment>
<comment type="sequence caution" evidence="2">
    <conflict type="erroneous termination">
        <sequence resource="EMBL-CDS" id="AAN80606"/>
    </conflict>
    <text>Truncated C-terminus.</text>
</comment>
<gene>
    <name evidence="1" type="primary">astA</name>
    <name type="ordered locus">c2147</name>
</gene>
<proteinExistence type="inferred from homology"/>
<protein>
    <recommendedName>
        <fullName evidence="1">Arginine N-succinyltransferase</fullName>
        <shortName evidence="1">AST</shortName>
        <ecNumber evidence="1">2.3.1.109</ecNumber>
    </recommendedName>
    <alternativeName>
        <fullName evidence="1">AOST</fullName>
    </alternativeName>
</protein>
<evidence type="ECO:0000255" key="1">
    <source>
        <dbReference type="HAMAP-Rule" id="MF_01171"/>
    </source>
</evidence>
<evidence type="ECO:0000305" key="2"/>
<dbReference type="EC" id="2.3.1.109" evidence="1"/>
<dbReference type="EMBL" id="AE014075">
    <property type="protein sequence ID" value="AAN80606.1"/>
    <property type="status" value="ALT_SEQ"/>
    <property type="molecule type" value="Genomic_DNA"/>
</dbReference>
<dbReference type="SMR" id="Q8FH00"/>
<dbReference type="STRING" id="199310.c2147"/>
<dbReference type="KEGG" id="ecc:c2147"/>
<dbReference type="eggNOG" id="COG3138">
    <property type="taxonomic scope" value="Bacteria"/>
</dbReference>
<dbReference type="HOGENOM" id="CLU_057655_0_0_6"/>
<dbReference type="UniPathway" id="UPA00185">
    <property type="reaction ID" value="UER00279"/>
</dbReference>
<dbReference type="Proteomes" id="UP000001410">
    <property type="component" value="Chromosome"/>
</dbReference>
<dbReference type="GO" id="GO:0008791">
    <property type="term" value="F:arginine N-succinyltransferase activity"/>
    <property type="evidence" value="ECO:0007669"/>
    <property type="project" value="UniProtKB-UniRule"/>
</dbReference>
<dbReference type="GO" id="GO:0019544">
    <property type="term" value="P:arginine catabolic process to glutamate"/>
    <property type="evidence" value="ECO:0007669"/>
    <property type="project" value="UniProtKB-UniRule"/>
</dbReference>
<dbReference type="GO" id="GO:0019545">
    <property type="term" value="P:arginine catabolic process to succinate"/>
    <property type="evidence" value="ECO:0007669"/>
    <property type="project" value="UniProtKB-UniRule"/>
</dbReference>
<dbReference type="Gene3D" id="2.40.40.20">
    <property type="match status" value="1"/>
</dbReference>
<dbReference type="HAMAP" id="MF_01171">
    <property type="entry name" value="AstA"/>
    <property type="match status" value="1"/>
</dbReference>
<dbReference type="InterPro" id="IPR016181">
    <property type="entry name" value="Acyl_CoA_acyltransferase"/>
</dbReference>
<dbReference type="InterPro" id="IPR007041">
    <property type="entry name" value="Arg_succinylTrfase_AstA/AruG"/>
</dbReference>
<dbReference type="InterPro" id="IPR017650">
    <property type="entry name" value="Arginine_N-succinylTrfase"/>
</dbReference>
<dbReference type="NCBIfam" id="TIGR03243">
    <property type="entry name" value="arg_catab_AOST"/>
    <property type="match status" value="1"/>
</dbReference>
<dbReference type="NCBIfam" id="TIGR03244">
    <property type="entry name" value="arg_catab_AstA"/>
    <property type="match status" value="1"/>
</dbReference>
<dbReference type="NCBIfam" id="NF007770">
    <property type="entry name" value="PRK10456.1"/>
    <property type="match status" value="1"/>
</dbReference>
<dbReference type="PANTHER" id="PTHR30420:SF1">
    <property type="entry name" value="ARGININE N-SUCCINYLTRANSFERASE"/>
    <property type="match status" value="1"/>
</dbReference>
<dbReference type="PANTHER" id="PTHR30420">
    <property type="entry name" value="N-SUCCINYLARGININE DIHYDROLASE"/>
    <property type="match status" value="1"/>
</dbReference>
<dbReference type="Pfam" id="PF04958">
    <property type="entry name" value="AstA"/>
    <property type="match status" value="1"/>
</dbReference>
<dbReference type="SUPFAM" id="SSF55729">
    <property type="entry name" value="Acyl-CoA N-acyltransferases (Nat)"/>
    <property type="match status" value="1"/>
</dbReference>
<accession>Q8FH00</accession>